<keyword id="KW-1185">Reference proteome</keyword>
<sequence length="360" mass="37014">MGVSDVFAVSGALEVVLEGVAGKGVMAVVYGSTRTSTIPGISIAGPSPEATLYTPTLDIEYLVAGRPLTLDVVPVSPEGVPTPAVITRAVARAFNIPLLPVDAGSWTEARVPHAKLPSRVTGGRIDVEPGLPSGASERLFREAYMLGSSLARGLDWIAVGESIPGGTTVAAAVMEALGYRAADLVSSSGKDNPRELKKRVVAQALSRLRECGARDVLEIVDCVGDPVHVSIAGLAVGAREAGAFVILAGGTQMGAVLAILSRLGMLDPRSTAVATTKWIALDRGSSIRGIVESIAPGLTVAAAGFSLEGSRYRGLRMYEEGYAKEGVGAGGSLVISLLRGAGVREILEAVESEYGRLLGG</sequence>
<gene>
    <name type="ordered locus">APE_2029.1</name>
</gene>
<accession>Q9YAB0</accession>
<protein>
    <recommendedName>
        <fullName evidence="1">UPF0284 protein APE_2029.1</fullName>
    </recommendedName>
</protein>
<evidence type="ECO:0000255" key="1">
    <source>
        <dbReference type="HAMAP-Rule" id="MF_01086"/>
    </source>
</evidence>
<feature type="chain" id="PRO_0000151047" description="UPF0284 protein APE_2029.1">
    <location>
        <begin position="1"/>
        <end position="360"/>
    </location>
</feature>
<comment type="similarity">
    <text evidence="1">Belongs to the UPF0284 family.</text>
</comment>
<organism>
    <name type="scientific">Aeropyrum pernix (strain ATCC 700893 / DSM 11879 / JCM 9820 / NBRC 100138 / K1)</name>
    <dbReference type="NCBI Taxonomy" id="272557"/>
    <lineage>
        <taxon>Archaea</taxon>
        <taxon>Thermoproteota</taxon>
        <taxon>Thermoprotei</taxon>
        <taxon>Desulfurococcales</taxon>
        <taxon>Desulfurococcaceae</taxon>
        <taxon>Aeropyrum</taxon>
    </lineage>
</organism>
<name>Y2029_AERPE</name>
<proteinExistence type="inferred from homology"/>
<reference key="1">
    <citation type="journal article" date="1999" name="DNA Res.">
        <title>Complete genome sequence of an aerobic hyper-thermophilic crenarchaeon, Aeropyrum pernix K1.</title>
        <authorList>
            <person name="Kawarabayasi Y."/>
            <person name="Hino Y."/>
            <person name="Horikawa H."/>
            <person name="Yamazaki S."/>
            <person name="Haikawa Y."/>
            <person name="Jin-no K."/>
            <person name="Takahashi M."/>
            <person name="Sekine M."/>
            <person name="Baba S."/>
            <person name="Ankai A."/>
            <person name="Kosugi H."/>
            <person name="Hosoyama A."/>
            <person name="Fukui S."/>
            <person name="Nagai Y."/>
            <person name="Nishijima K."/>
            <person name="Nakazawa H."/>
            <person name="Takamiya M."/>
            <person name="Masuda S."/>
            <person name="Funahashi T."/>
            <person name="Tanaka T."/>
            <person name="Kudoh Y."/>
            <person name="Yamazaki J."/>
            <person name="Kushida N."/>
            <person name="Oguchi A."/>
            <person name="Aoki K."/>
            <person name="Kubota K."/>
            <person name="Nakamura Y."/>
            <person name="Nomura N."/>
            <person name="Sako Y."/>
            <person name="Kikuchi H."/>
        </authorList>
    </citation>
    <scope>NUCLEOTIDE SEQUENCE [LARGE SCALE GENOMIC DNA]</scope>
    <source>
        <strain>ATCC 700893 / DSM 11879 / JCM 9820 / NBRC 100138 / K1</strain>
    </source>
</reference>
<dbReference type="EMBL" id="BA000002">
    <property type="protein sequence ID" value="BAA81039.2"/>
    <property type="molecule type" value="Genomic_DNA"/>
</dbReference>
<dbReference type="PIR" id="G72506">
    <property type="entry name" value="G72506"/>
</dbReference>
<dbReference type="RefSeq" id="WP_010866747.1">
    <property type="nucleotide sequence ID" value="NC_000854.2"/>
</dbReference>
<dbReference type="SMR" id="Q9YAB0"/>
<dbReference type="STRING" id="272557.APE_2029.1"/>
<dbReference type="EnsemblBacteria" id="BAA81039">
    <property type="protein sequence ID" value="BAA81039"/>
    <property type="gene ID" value="APE_2029.1"/>
</dbReference>
<dbReference type="GeneID" id="1445141"/>
<dbReference type="KEGG" id="ape:APE_2029.1"/>
<dbReference type="PATRIC" id="fig|272557.25.peg.1351"/>
<dbReference type="eggNOG" id="arCOG04272">
    <property type="taxonomic scope" value="Archaea"/>
</dbReference>
<dbReference type="Proteomes" id="UP000002518">
    <property type="component" value="Chromosome"/>
</dbReference>
<dbReference type="GO" id="GO:0008939">
    <property type="term" value="F:nicotinate-nucleotide-dimethylbenzimidazole phosphoribosyltransferase activity"/>
    <property type="evidence" value="ECO:0007669"/>
    <property type="project" value="InterPro"/>
</dbReference>
<dbReference type="CDD" id="cd02439">
    <property type="entry name" value="DMB-PRT_CobT"/>
    <property type="match status" value="1"/>
</dbReference>
<dbReference type="Gene3D" id="3.40.50.10210">
    <property type="match status" value="1"/>
</dbReference>
<dbReference type="HAMAP" id="MF_01086">
    <property type="entry name" value="UPF0284"/>
    <property type="match status" value="1"/>
</dbReference>
<dbReference type="InterPro" id="IPR003200">
    <property type="entry name" value="Nict_dMeBzImd_PRibTrfase"/>
</dbReference>
<dbReference type="InterPro" id="IPR002805">
    <property type="entry name" value="Nict_dMeBzImd_PRibTrfase_arc"/>
</dbReference>
<dbReference type="InterPro" id="IPR036087">
    <property type="entry name" value="Nict_dMeBzImd_PRibTrfase_sf"/>
</dbReference>
<dbReference type="NCBIfam" id="TIGR00303">
    <property type="entry name" value="nicotinate mononucleotide-dependent phosphoribosyltransferase CobT"/>
    <property type="match status" value="1"/>
</dbReference>
<dbReference type="NCBIfam" id="NF003372">
    <property type="entry name" value="PRK04447.1-5"/>
    <property type="match status" value="1"/>
</dbReference>
<dbReference type="PANTHER" id="PTHR38811">
    <property type="match status" value="1"/>
</dbReference>
<dbReference type="PANTHER" id="PTHR38811:SF1">
    <property type="entry name" value="UPF0284 PROTEIN SLL1500"/>
    <property type="match status" value="1"/>
</dbReference>
<dbReference type="Pfam" id="PF02277">
    <property type="entry name" value="DBI_PRT"/>
    <property type="match status" value="1"/>
</dbReference>
<dbReference type="SUPFAM" id="SSF52733">
    <property type="entry name" value="Nicotinate mononucleotide:5,6-dimethylbenzimidazole phosphoribosyltransferase (CobT)"/>
    <property type="match status" value="1"/>
</dbReference>